<sequence length="87" mass="10136">MKTKLREMLRFPCFFTYKIIGLAQPELIDQIIKVIQIQIPGDYTPQVKSSNRGNYLSVSITICAKNFEQIECLYHEISKINIVRMVL</sequence>
<protein>
    <recommendedName>
        <fullName>UPF0250 protein BU488</fullName>
    </recommendedName>
</protein>
<comment type="similarity">
    <text evidence="1">Belongs to the UPF0250 family.</text>
</comment>
<gene>
    <name type="ordered locus">BU488</name>
</gene>
<accession>P57559</accession>
<keyword id="KW-1185">Reference proteome</keyword>
<dbReference type="EMBL" id="BA000003">
    <property type="protein sequence ID" value="BAB13184.1"/>
    <property type="molecule type" value="Genomic_DNA"/>
</dbReference>
<dbReference type="RefSeq" id="NP_240298.1">
    <property type="nucleotide sequence ID" value="NC_002528.1"/>
</dbReference>
<dbReference type="SMR" id="P57559"/>
<dbReference type="STRING" id="563178.BUAP5A_481"/>
<dbReference type="EnsemblBacteria" id="BAB13184">
    <property type="protein sequence ID" value="BAB13184"/>
    <property type="gene ID" value="BAB13184"/>
</dbReference>
<dbReference type="KEGG" id="buc:BU488"/>
<dbReference type="PATRIC" id="fig|107806.10.peg.496"/>
<dbReference type="eggNOG" id="COG2921">
    <property type="taxonomic scope" value="Bacteria"/>
</dbReference>
<dbReference type="HOGENOM" id="CLU_161438_2_1_6"/>
<dbReference type="BioCyc" id="BAPH107806:GBZJ-481-MONOMER"/>
<dbReference type="Proteomes" id="UP000001806">
    <property type="component" value="Chromosome"/>
</dbReference>
<dbReference type="GO" id="GO:0005829">
    <property type="term" value="C:cytosol"/>
    <property type="evidence" value="ECO:0007669"/>
    <property type="project" value="TreeGrafter"/>
</dbReference>
<dbReference type="Gene3D" id="3.30.70.260">
    <property type="match status" value="1"/>
</dbReference>
<dbReference type="HAMAP" id="MF_00659">
    <property type="entry name" value="UPF0250"/>
    <property type="match status" value="1"/>
</dbReference>
<dbReference type="InterPro" id="IPR007454">
    <property type="entry name" value="UPF0250_YbeD-like"/>
</dbReference>
<dbReference type="InterPro" id="IPR027471">
    <property type="entry name" value="YbeD-like_sf"/>
</dbReference>
<dbReference type="NCBIfam" id="NF003447">
    <property type="entry name" value="PRK04998.1"/>
    <property type="match status" value="1"/>
</dbReference>
<dbReference type="PANTHER" id="PTHR38036">
    <property type="entry name" value="UPF0250 PROTEIN YBED"/>
    <property type="match status" value="1"/>
</dbReference>
<dbReference type="PANTHER" id="PTHR38036:SF1">
    <property type="entry name" value="UPF0250 PROTEIN YBED"/>
    <property type="match status" value="1"/>
</dbReference>
<dbReference type="Pfam" id="PF04359">
    <property type="entry name" value="DUF493"/>
    <property type="match status" value="1"/>
</dbReference>
<dbReference type="SUPFAM" id="SSF117991">
    <property type="entry name" value="YbeD/HP0495-like"/>
    <property type="match status" value="1"/>
</dbReference>
<reference key="1">
    <citation type="journal article" date="2000" name="Nature">
        <title>Genome sequence of the endocellular bacterial symbiont of aphids Buchnera sp. APS.</title>
        <authorList>
            <person name="Shigenobu S."/>
            <person name="Watanabe H."/>
            <person name="Hattori M."/>
            <person name="Sakaki Y."/>
            <person name="Ishikawa H."/>
        </authorList>
    </citation>
    <scope>NUCLEOTIDE SEQUENCE [LARGE SCALE GENOMIC DNA]</scope>
    <source>
        <strain>APS</strain>
    </source>
</reference>
<name>Y488_BUCAI</name>
<evidence type="ECO:0000305" key="1"/>
<proteinExistence type="inferred from homology"/>
<organism>
    <name type="scientific">Buchnera aphidicola subsp. Acyrthosiphon pisum (strain APS)</name>
    <name type="common">Acyrthosiphon pisum symbiotic bacterium</name>
    <dbReference type="NCBI Taxonomy" id="107806"/>
    <lineage>
        <taxon>Bacteria</taxon>
        <taxon>Pseudomonadati</taxon>
        <taxon>Pseudomonadota</taxon>
        <taxon>Gammaproteobacteria</taxon>
        <taxon>Enterobacterales</taxon>
        <taxon>Erwiniaceae</taxon>
        <taxon>Buchnera</taxon>
    </lineage>
</organism>
<feature type="chain" id="PRO_0000209292" description="UPF0250 protein BU488">
    <location>
        <begin position="1"/>
        <end position="87"/>
    </location>
</feature>